<keyword id="KW-0025">Alternative splicing</keyword>
<keyword id="KW-0053">Apoptosis</keyword>
<keyword id="KW-0966">Cell projection</keyword>
<keyword id="KW-0969">Cilium</keyword>
<keyword id="KW-0175">Coiled coil</keyword>
<keyword id="KW-0963">Cytoplasm</keyword>
<keyword id="KW-0206">Cytoskeleton</keyword>
<keyword id="KW-0238">DNA-binding</keyword>
<keyword id="KW-0333">Golgi apparatus</keyword>
<keyword id="KW-1185">Reference proteome</keyword>
<keyword id="KW-0804">Transcription</keyword>
<keyword id="KW-0805">Transcription regulation</keyword>
<organism>
    <name type="scientific">Mus musculus</name>
    <name type="common">Mouse</name>
    <dbReference type="NCBI Taxonomy" id="10090"/>
    <lineage>
        <taxon>Eukaryota</taxon>
        <taxon>Metazoa</taxon>
        <taxon>Chordata</taxon>
        <taxon>Craniata</taxon>
        <taxon>Vertebrata</taxon>
        <taxon>Euteleostomi</taxon>
        <taxon>Mammalia</taxon>
        <taxon>Eutheria</taxon>
        <taxon>Euarchontoglires</taxon>
        <taxon>Glires</taxon>
        <taxon>Rodentia</taxon>
        <taxon>Myomorpha</taxon>
        <taxon>Muroidea</taxon>
        <taxon>Muridae</taxon>
        <taxon>Murinae</taxon>
        <taxon>Mus</taxon>
        <taxon>Mus</taxon>
    </lineage>
</organism>
<proteinExistence type="evidence at protein level"/>
<evidence type="ECO:0000250" key="1"/>
<evidence type="ECO:0000250" key="2">
    <source>
        <dbReference type="UniProtKB" id="Q9NWB7"/>
    </source>
</evidence>
<evidence type="ECO:0000255" key="3"/>
<evidence type="ECO:0000269" key="4">
    <source>
    </source>
</evidence>
<evidence type="ECO:0000269" key="5">
    <source>
    </source>
</evidence>
<evidence type="ECO:0000269" key="6">
    <source>
    </source>
</evidence>
<evidence type="ECO:0000269" key="7">
    <source>
    </source>
</evidence>
<evidence type="ECO:0000269" key="8">
    <source>
    </source>
</evidence>
<evidence type="ECO:0000269" key="9">
    <source>
    </source>
</evidence>
<evidence type="ECO:0000269" key="10">
    <source>
    </source>
</evidence>
<evidence type="ECO:0000269" key="11">
    <source>
    </source>
</evidence>
<evidence type="ECO:0000269" key="12">
    <source>
    </source>
</evidence>
<evidence type="ECO:0000269" key="13">
    <source>
    </source>
</evidence>
<evidence type="ECO:0000269" key="14">
    <source>
    </source>
</evidence>
<evidence type="ECO:0000269" key="15">
    <source>
    </source>
</evidence>
<evidence type="ECO:0000303" key="16">
    <source>
    </source>
</evidence>
<evidence type="ECO:0000305" key="17"/>
<dbReference type="EMBL" id="AF274590">
    <property type="protein sequence ID" value="AAK69403.1"/>
    <property type="molecule type" value="mRNA"/>
</dbReference>
<dbReference type="EMBL" id="DQ266091">
    <property type="protein sequence ID" value="ABB72788.1"/>
    <property type="molecule type" value="mRNA"/>
</dbReference>
<dbReference type="EMBL" id="AK014731">
    <property type="protein sequence ID" value="BAB29522.1"/>
    <property type="molecule type" value="mRNA"/>
</dbReference>
<dbReference type="EMBL" id="AK047217">
    <property type="protein sequence ID" value="BAC32995.1"/>
    <property type="molecule type" value="mRNA"/>
</dbReference>
<dbReference type="CCDS" id="CCDS28211.1">
    <molecule id="Q8BXG3-1"/>
</dbReference>
<dbReference type="RefSeq" id="NP_082956.2">
    <molecule id="Q8BXG3-1"/>
    <property type="nucleotide sequence ID" value="NM_028680.3"/>
</dbReference>
<dbReference type="SMR" id="Q8BXG3"/>
<dbReference type="BioGRID" id="216353">
    <property type="interactions" value="4"/>
</dbReference>
<dbReference type="ComplexPortal" id="CPX-5028">
    <property type="entry name" value="Intraflagellar transport complex B"/>
</dbReference>
<dbReference type="CORUM" id="Q8BXG3"/>
<dbReference type="FunCoup" id="Q8BXG3">
    <property type="interactions" value="456"/>
</dbReference>
<dbReference type="STRING" id="10090.ENSMUSP00000046645"/>
<dbReference type="TCDB" id="1.X.1.1.3">
    <property type="family name" value="the intraflagellar transporter-a complex (ift-a) family"/>
</dbReference>
<dbReference type="iPTMnet" id="Q8BXG3"/>
<dbReference type="PhosphoSitePlus" id="Q8BXG3"/>
<dbReference type="SwissPalm" id="Q8BXG3"/>
<dbReference type="PaxDb" id="10090-ENSMUSP00000046645"/>
<dbReference type="ProteomicsDB" id="266958">
    <molecule id="Q8BXG3-1"/>
</dbReference>
<dbReference type="ProteomicsDB" id="266959">
    <molecule id="Q8BXG3-2"/>
</dbReference>
<dbReference type="Pumba" id="Q8BXG3"/>
<dbReference type="Antibodypedia" id="32363">
    <property type="antibodies" value="314 antibodies from 33 providers"/>
</dbReference>
<dbReference type="DNASU" id="73916"/>
<dbReference type="Ensembl" id="ENSMUST00000046777.11">
    <molecule id="Q8BXG3-1"/>
    <property type="protein sequence ID" value="ENSMUSP00000046645.5"/>
    <property type="gene ID" value="ENSMUSG00000032965.12"/>
</dbReference>
<dbReference type="Ensembl" id="ENSMUST00000142682.9">
    <molecule id="Q8BXG3-2"/>
    <property type="protein sequence ID" value="ENSMUSP00000117882.3"/>
    <property type="gene ID" value="ENSMUSG00000032965.12"/>
</dbReference>
<dbReference type="GeneID" id="73916"/>
<dbReference type="KEGG" id="mmu:73916"/>
<dbReference type="UCSC" id="uc007zkf.1">
    <molecule id="Q8BXG3-1"/>
    <property type="organism name" value="mouse"/>
</dbReference>
<dbReference type="AGR" id="MGI:1921166"/>
<dbReference type="CTD" id="55081"/>
<dbReference type="MGI" id="MGI:1921166">
    <property type="gene designation" value="Ift57"/>
</dbReference>
<dbReference type="VEuPathDB" id="HostDB:ENSMUSG00000032965"/>
<dbReference type="eggNOG" id="KOG0972">
    <property type="taxonomic scope" value="Eukaryota"/>
</dbReference>
<dbReference type="GeneTree" id="ENSGT00390000006307"/>
<dbReference type="InParanoid" id="Q8BXG3"/>
<dbReference type="OMA" id="VHAHDQD"/>
<dbReference type="OrthoDB" id="423881at2759"/>
<dbReference type="PhylomeDB" id="Q8BXG3"/>
<dbReference type="TreeFam" id="TF106156"/>
<dbReference type="Reactome" id="R-MMU-5610787">
    <property type="pathway name" value="Hedgehog 'off' state"/>
</dbReference>
<dbReference type="Reactome" id="R-MMU-5620924">
    <property type="pathway name" value="Intraflagellar transport"/>
</dbReference>
<dbReference type="BioGRID-ORCS" id="73916">
    <property type="hits" value="4 hits in 76 CRISPR screens"/>
</dbReference>
<dbReference type="ChiTaRS" id="Ift57">
    <property type="organism name" value="mouse"/>
</dbReference>
<dbReference type="PRO" id="PR:Q8BXG3"/>
<dbReference type="Proteomes" id="UP000000589">
    <property type="component" value="Chromosome 16"/>
</dbReference>
<dbReference type="RNAct" id="Q8BXG3">
    <property type="molecule type" value="protein"/>
</dbReference>
<dbReference type="Bgee" id="ENSMUSG00000032965">
    <property type="expression patterns" value="Expressed in choroid plexus epithelium and 247 other cell types or tissues"/>
</dbReference>
<dbReference type="ExpressionAtlas" id="Q8BXG3">
    <property type="expression patterns" value="baseline and differential"/>
</dbReference>
<dbReference type="GO" id="GO:0005930">
    <property type="term" value="C:axoneme"/>
    <property type="evidence" value="ECO:0000314"/>
    <property type="project" value="CACAO"/>
</dbReference>
<dbReference type="GO" id="GO:0005813">
    <property type="term" value="C:centrosome"/>
    <property type="evidence" value="ECO:0000314"/>
    <property type="project" value="MGI"/>
</dbReference>
<dbReference type="GO" id="GO:0036064">
    <property type="term" value="C:ciliary basal body"/>
    <property type="evidence" value="ECO:0000314"/>
    <property type="project" value="UniProtKB"/>
</dbReference>
<dbReference type="GO" id="GO:0097546">
    <property type="term" value="C:ciliary base"/>
    <property type="evidence" value="ECO:0000250"/>
    <property type="project" value="UniProtKB"/>
</dbReference>
<dbReference type="GO" id="GO:0005929">
    <property type="term" value="C:cilium"/>
    <property type="evidence" value="ECO:0000314"/>
    <property type="project" value="BHF-UCL"/>
</dbReference>
<dbReference type="GO" id="GO:0044292">
    <property type="term" value="C:dendrite terminus"/>
    <property type="evidence" value="ECO:0000314"/>
    <property type="project" value="MGI"/>
</dbReference>
<dbReference type="GO" id="GO:0005794">
    <property type="term" value="C:Golgi apparatus"/>
    <property type="evidence" value="ECO:0000314"/>
    <property type="project" value="MGI"/>
</dbReference>
<dbReference type="GO" id="GO:0030992">
    <property type="term" value="C:intraciliary transport particle B"/>
    <property type="evidence" value="ECO:0000314"/>
    <property type="project" value="UniProtKB"/>
</dbReference>
<dbReference type="GO" id="GO:0032391">
    <property type="term" value="C:photoreceptor connecting cilium"/>
    <property type="evidence" value="ECO:0000314"/>
    <property type="project" value="MGI"/>
</dbReference>
<dbReference type="GO" id="GO:0003677">
    <property type="term" value="F:DNA binding"/>
    <property type="evidence" value="ECO:0007669"/>
    <property type="project" value="UniProtKB-KW"/>
</dbReference>
<dbReference type="GO" id="GO:0006915">
    <property type="term" value="P:apoptotic process"/>
    <property type="evidence" value="ECO:0000266"/>
    <property type="project" value="MGI"/>
</dbReference>
<dbReference type="GO" id="GO:0060271">
    <property type="term" value="P:cilium assembly"/>
    <property type="evidence" value="ECO:0000303"/>
    <property type="project" value="ComplexPortal"/>
</dbReference>
<dbReference type="GO" id="GO:0001947">
    <property type="term" value="P:heart looping"/>
    <property type="evidence" value="ECO:0000315"/>
    <property type="project" value="MGI"/>
</dbReference>
<dbReference type="GO" id="GO:0035720">
    <property type="term" value="P:intraciliary anterograde transport"/>
    <property type="evidence" value="ECO:0000303"/>
    <property type="project" value="ComplexPortal"/>
</dbReference>
<dbReference type="GO" id="GO:0042073">
    <property type="term" value="P:intraciliary transport"/>
    <property type="evidence" value="ECO:0000305"/>
    <property type="project" value="MGI"/>
</dbReference>
<dbReference type="GO" id="GO:0043616">
    <property type="term" value="P:keratinocyte proliferation"/>
    <property type="evidence" value="ECO:0000315"/>
    <property type="project" value="MGI"/>
</dbReference>
<dbReference type="GO" id="GO:0060972">
    <property type="term" value="P:left/right pattern formation"/>
    <property type="evidence" value="ECO:0000315"/>
    <property type="project" value="MGI"/>
</dbReference>
<dbReference type="GO" id="GO:0044458">
    <property type="term" value="P:motile cilium assembly"/>
    <property type="evidence" value="ECO:0000315"/>
    <property type="project" value="MGI"/>
</dbReference>
<dbReference type="GO" id="GO:0010839">
    <property type="term" value="P:negative regulation of keratinocyte proliferation"/>
    <property type="evidence" value="ECO:0000315"/>
    <property type="project" value="MGI"/>
</dbReference>
<dbReference type="GO" id="GO:0001843">
    <property type="term" value="P:neural tube closure"/>
    <property type="evidence" value="ECO:0000315"/>
    <property type="project" value="MGI"/>
</dbReference>
<dbReference type="GO" id="GO:1905515">
    <property type="term" value="P:non-motile cilium assembly"/>
    <property type="evidence" value="ECO:0000315"/>
    <property type="project" value="MGI"/>
</dbReference>
<dbReference type="GO" id="GO:0042981">
    <property type="term" value="P:regulation of apoptotic process"/>
    <property type="evidence" value="ECO:0000266"/>
    <property type="project" value="MGI"/>
</dbReference>
<dbReference type="GO" id="GO:0007224">
    <property type="term" value="P:smoothened signaling pathway"/>
    <property type="evidence" value="ECO:0000315"/>
    <property type="project" value="MGI"/>
</dbReference>
<dbReference type="InterPro" id="IPR019530">
    <property type="entry name" value="Intra-flagellar_transport_57"/>
</dbReference>
<dbReference type="PANTHER" id="PTHR16011">
    <property type="entry name" value="IFT57/HIPPI"/>
    <property type="match status" value="1"/>
</dbReference>
<dbReference type="PANTHER" id="PTHR16011:SF0">
    <property type="entry name" value="INTRAFLAGELLAR TRANSPORT PROTEIN 57 HOMOLOG"/>
    <property type="match status" value="1"/>
</dbReference>
<dbReference type="Pfam" id="PF10498">
    <property type="entry name" value="IFT57"/>
    <property type="match status" value="1"/>
</dbReference>
<sequence>MAAAAAVIPPSGLDDGVSRARGEGAGEAVVERGPGAAYHMFVVMEDLVEKLKLLRYEEELLRKSNLKPPSRHYFALPTNPGEQFYMFCTLAAWLINKTGRAFEQPQEYDDPNATISNILSELRSFGRTADFPPSKLKSGYGEQVCYVLDCLAEEALKYIGFTWKRPSYPVEELEEETVPEDDAELTLSKVDEEFVEEETDNEENFIDLNVLKAQTYRLDTNESAKQEDILESTTDAAEWSLEVERVLPQLKVTIRTDNKDWRIHVDQMHQHKSGIESALKETKGFLDKLHNEISRTLEKIGSREKYINNQLEHLVQEYRGAQAQLSEARERYQQGNGGVTERTRLLSEVTEELEKVKQEMEEKGSSMTDGTPLVKIKQSLTKLKQETVQMDIRIGVVEHTLLQSKLKEKCNMTRDMHAAVTPESAIGFY</sequence>
<comment type="function">
    <text evidence="8">Required for the formation of cilia. Plays an indirect role in sonic hedgehog signaling, cilia being required for all activity of the hedgehog pathway. Has pro-apoptotic function via its interaction with HIP1, leading to recruit caspase-8 (CASP8) and trigger apoptosis. Has the ability to bind DNA sequence motif 5'-AAAGACATG-3' present in the promoter of caspase genes such as CASP1, CASP8 and CASP10, suggesting that it may act as a transcription regulator; however the relevance of such function remains unclear.</text>
</comment>
<comment type="subunit">
    <text evidence="2 4 7 9 10 11 12 13 14">Component of the IFT complex B, at least composed of IFT20, IFT22, IFT25, IFT27, IFT46, IFT52, TRAF3IP1/IFT54, IFT57, IFT74, IFT80, IFT81, and IFT88 (PubMed:19253336, PubMed:23810713). Interacts with IFT20 (PubMed:12821668). Interacts with IFT88 (PubMed:11062270, PubMed:19253336, PubMed:23810713). Interacts with IFT80, IFT-81, IFT74, IFT172, IFT70B and KIF17 (PubMed:23810713). Interacts with BLOC1S2 (PubMed:18188704). Interacts with RYBP (PubMed:17874297). Interacts with HOMER1; the interaction possibly prevents the pro-apoptotic effects of IFT57 (PubMed:17107665). Interacts with HIP1 (By similarity). In normal conditions, it poorly interacts with HIP1, HIP1 being strongly associated with HTT (By similarity). However, in mutant HTT proteins with a long poly-Gln region, interaction between HTT and HIP1 is inhibited, promoting the interaction between HIP1 and IFT57, leading to apoptosis (By similarity). Interacts with BFAR (By similarity). Interacts with TTC25 (PubMed:25860617). Interacts with USH1G (By similarity).</text>
</comment>
<comment type="subcellular location">
    <subcellularLocation>
        <location evidence="15">Cell projection</location>
        <location evidence="15">Cilium</location>
    </subcellularLocation>
    <subcellularLocation>
        <location>Cytoplasm</location>
        <location>Cytoskeleton</location>
        <location>Cilium basal body</location>
    </subcellularLocation>
    <subcellularLocation>
        <location>Golgi apparatus</location>
    </subcellularLocation>
    <text>Concentrates within the inner segment of cilia.</text>
</comment>
<comment type="alternative products">
    <event type="alternative splicing"/>
    <isoform>
        <id>Q8BXG3-1</id>
        <name>1</name>
        <sequence type="displayed"/>
    </isoform>
    <isoform>
        <id>Q8BXG3-2</id>
        <name>2</name>
        <sequence type="described" ref="VSP_032843"/>
    </isoform>
</comment>
<comment type="tissue specificity">
    <text evidence="5 6 9">Present in retina and testis. In brain, it is present in the cortex, striatum, globus pallidus, hypothalamus and cerebellum. Present at high level in neurons and neuropil throughout the brain (at protein level). Expressed in hippocampal neurons, where it colocalizes with HOMER1 at postsynaptic regions.</text>
</comment>
<comment type="developmental stage">
    <text evidence="8">Ubiquitous through the epiblast. Expression is detected in mesoderm and most strongly in ectoderm, but not in endoderm. Highly expressed in the region of the node, a depression at the surface of the embryo proposed to have a role in left-right axis patterning. At 8.5 dpc, it is widely expressed except in the heart. Stronger expression is observed in the anterior midline, the forebrain and the somites. Strong expression remains in the forebrain at 9.5 dpc and 10.5 dpc and extends to all regions of the neural tube. At those stages, high expression is also found in the branchial arches and in the limb buds. Embryo section at 9.5 dpc also shows expression throughout the neural tube and the mesoderm, but not in the surface ectoderm. The strongest expression is observed on the luminal edge of the neural tube and in the ventral foregut.</text>
</comment>
<comment type="domain">
    <text evidence="1">The pseudo DED region (pDED) mediates the interaction with HIP1.</text>
</comment>
<comment type="disruption phenotype">
    <text evidence="8">Mice show randomization of the embryo turning process and heart looping, which are hallmarks of defective left-right (LR) axis patterning. Motile monocilia normally present at the surface of the embryonic node, and proposed to initiate the break in LR symmetry, are absent. Furthermore, defects in central nervous system development are observed. The Sonic hedgehog (Shh) pathway is down-regulated in the neural tube, resulting in failure to establish ventral neural cell fate.</text>
</comment>
<comment type="similarity">
    <text evidence="17">Belongs to the IFT57 family.</text>
</comment>
<accession>Q8BXG3</accession>
<accession>Q924M2</accession>
<accession>Q9CUS6</accession>
<protein>
    <recommendedName>
        <fullName>Intraflagellar transport protein 57 homolog</fullName>
    </recommendedName>
    <alternativeName>
        <fullName>HIP1-interacting protein</fullName>
    </alternativeName>
</protein>
<name>IFT57_MOUSE</name>
<reference key="1">
    <citation type="journal article" date="2002" name="Nat. Cell Biol.">
        <title>Recruitment and activation of caspase-8 by the Huntingtin-interacting protein Hip-1 and a novel partner Hippi.</title>
        <authorList>
            <person name="Gervais F.G."/>
            <person name="Singaraja R."/>
            <person name="Xanthoudakis S."/>
            <person name="Gutekunst C.-A."/>
            <person name="Leavitt B.R."/>
            <person name="Metzler M."/>
            <person name="Hackam A.S."/>
            <person name="Tam J."/>
            <person name="Vaillancourt J.P."/>
            <person name="Houtzager V."/>
            <person name="Rasper D.M."/>
            <person name="Roy S."/>
            <person name="Hayden M.R."/>
            <person name="Nicholson D.W."/>
        </authorList>
    </citation>
    <scope>NUCLEOTIDE SEQUENCE [MRNA] (ISOFORM 1)</scope>
    <scope>SUBCELLULAR LOCATION</scope>
    <scope>TISSUE SPECIFICITY</scope>
</reference>
<reference key="2">
    <citation type="submission" date="2005-10" db="EMBL/GenBank/DDBJ databases">
        <title>Mouse intraflagellar transport protein IFT57.</title>
        <authorList>
            <person name="Pazour G.J."/>
            <person name="Walker B.L."/>
            <person name="Witman G.B."/>
            <person name="Rosenbaum J.L."/>
            <person name="Cole D.G."/>
        </authorList>
    </citation>
    <scope>NUCLEOTIDE SEQUENCE [MRNA] (ISOFORM 1)</scope>
    <source>
        <strain>C57BL/6J</strain>
    </source>
</reference>
<reference key="3">
    <citation type="journal article" date="2005" name="Science">
        <title>The transcriptional landscape of the mammalian genome.</title>
        <authorList>
            <person name="Carninci P."/>
            <person name="Kasukawa T."/>
            <person name="Katayama S."/>
            <person name="Gough J."/>
            <person name="Frith M.C."/>
            <person name="Maeda N."/>
            <person name="Oyama R."/>
            <person name="Ravasi T."/>
            <person name="Lenhard B."/>
            <person name="Wells C."/>
            <person name="Kodzius R."/>
            <person name="Shimokawa K."/>
            <person name="Bajic V.B."/>
            <person name="Brenner S.E."/>
            <person name="Batalov S."/>
            <person name="Forrest A.R."/>
            <person name="Zavolan M."/>
            <person name="Davis M.J."/>
            <person name="Wilming L.G."/>
            <person name="Aidinis V."/>
            <person name="Allen J.E."/>
            <person name="Ambesi-Impiombato A."/>
            <person name="Apweiler R."/>
            <person name="Aturaliya R.N."/>
            <person name="Bailey T.L."/>
            <person name="Bansal M."/>
            <person name="Baxter L."/>
            <person name="Beisel K.W."/>
            <person name="Bersano T."/>
            <person name="Bono H."/>
            <person name="Chalk A.M."/>
            <person name="Chiu K.P."/>
            <person name="Choudhary V."/>
            <person name="Christoffels A."/>
            <person name="Clutterbuck D.R."/>
            <person name="Crowe M.L."/>
            <person name="Dalla E."/>
            <person name="Dalrymple B.P."/>
            <person name="de Bono B."/>
            <person name="Della Gatta G."/>
            <person name="di Bernardo D."/>
            <person name="Down T."/>
            <person name="Engstrom P."/>
            <person name="Fagiolini M."/>
            <person name="Faulkner G."/>
            <person name="Fletcher C.F."/>
            <person name="Fukushima T."/>
            <person name="Furuno M."/>
            <person name="Futaki S."/>
            <person name="Gariboldi M."/>
            <person name="Georgii-Hemming P."/>
            <person name="Gingeras T.R."/>
            <person name="Gojobori T."/>
            <person name="Green R.E."/>
            <person name="Gustincich S."/>
            <person name="Harbers M."/>
            <person name="Hayashi Y."/>
            <person name="Hensch T.K."/>
            <person name="Hirokawa N."/>
            <person name="Hill D."/>
            <person name="Huminiecki L."/>
            <person name="Iacono M."/>
            <person name="Ikeo K."/>
            <person name="Iwama A."/>
            <person name="Ishikawa T."/>
            <person name="Jakt M."/>
            <person name="Kanapin A."/>
            <person name="Katoh M."/>
            <person name="Kawasawa Y."/>
            <person name="Kelso J."/>
            <person name="Kitamura H."/>
            <person name="Kitano H."/>
            <person name="Kollias G."/>
            <person name="Krishnan S.P."/>
            <person name="Kruger A."/>
            <person name="Kummerfeld S.K."/>
            <person name="Kurochkin I.V."/>
            <person name="Lareau L.F."/>
            <person name="Lazarevic D."/>
            <person name="Lipovich L."/>
            <person name="Liu J."/>
            <person name="Liuni S."/>
            <person name="McWilliam S."/>
            <person name="Madan Babu M."/>
            <person name="Madera M."/>
            <person name="Marchionni L."/>
            <person name="Matsuda H."/>
            <person name="Matsuzawa S."/>
            <person name="Miki H."/>
            <person name="Mignone F."/>
            <person name="Miyake S."/>
            <person name="Morris K."/>
            <person name="Mottagui-Tabar S."/>
            <person name="Mulder N."/>
            <person name="Nakano N."/>
            <person name="Nakauchi H."/>
            <person name="Ng P."/>
            <person name="Nilsson R."/>
            <person name="Nishiguchi S."/>
            <person name="Nishikawa S."/>
            <person name="Nori F."/>
            <person name="Ohara O."/>
            <person name="Okazaki Y."/>
            <person name="Orlando V."/>
            <person name="Pang K.C."/>
            <person name="Pavan W.J."/>
            <person name="Pavesi G."/>
            <person name="Pesole G."/>
            <person name="Petrovsky N."/>
            <person name="Piazza S."/>
            <person name="Reed J."/>
            <person name="Reid J.F."/>
            <person name="Ring B.Z."/>
            <person name="Ringwald M."/>
            <person name="Rost B."/>
            <person name="Ruan Y."/>
            <person name="Salzberg S.L."/>
            <person name="Sandelin A."/>
            <person name="Schneider C."/>
            <person name="Schoenbach C."/>
            <person name="Sekiguchi K."/>
            <person name="Semple C.A."/>
            <person name="Seno S."/>
            <person name="Sessa L."/>
            <person name="Sheng Y."/>
            <person name="Shibata Y."/>
            <person name="Shimada H."/>
            <person name="Shimada K."/>
            <person name="Silva D."/>
            <person name="Sinclair B."/>
            <person name="Sperling S."/>
            <person name="Stupka E."/>
            <person name="Sugiura K."/>
            <person name="Sultana R."/>
            <person name="Takenaka Y."/>
            <person name="Taki K."/>
            <person name="Tammoja K."/>
            <person name="Tan S.L."/>
            <person name="Tang S."/>
            <person name="Taylor M.S."/>
            <person name="Tegner J."/>
            <person name="Teichmann S.A."/>
            <person name="Ueda H.R."/>
            <person name="van Nimwegen E."/>
            <person name="Verardo R."/>
            <person name="Wei C.L."/>
            <person name="Yagi K."/>
            <person name="Yamanishi H."/>
            <person name="Zabarovsky E."/>
            <person name="Zhu S."/>
            <person name="Zimmer A."/>
            <person name="Hide W."/>
            <person name="Bult C."/>
            <person name="Grimmond S.M."/>
            <person name="Teasdale R.D."/>
            <person name="Liu E.T."/>
            <person name="Brusic V."/>
            <person name="Quackenbush J."/>
            <person name="Wahlestedt C."/>
            <person name="Mattick J.S."/>
            <person name="Hume D.A."/>
            <person name="Kai C."/>
            <person name="Sasaki D."/>
            <person name="Tomaru Y."/>
            <person name="Fukuda S."/>
            <person name="Kanamori-Katayama M."/>
            <person name="Suzuki M."/>
            <person name="Aoki J."/>
            <person name="Arakawa T."/>
            <person name="Iida J."/>
            <person name="Imamura K."/>
            <person name="Itoh M."/>
            <person name="Kato T."/>
            <person name="Kawaji H."/>
            <person name="Kawagashira N."/>
            <person name="Kawashima T."/>
            <person name="Kojima M."/>
            <person name="Kondo S."/>
            <person name="Konno H."/>
            <person name="Nakano K."/>
            <person name="Ninomiya N."/>
            <person name="Nishio T."/>
            <person name="Okada M."/>
            <person name="Plessy C."/>
            <person name="Shibata K."/>
            <person name="Shiraki T."/>
            <person name="Suzuki S."/>
            <person name="Tagami M."/>
            <person name="Waki K."/>
            <person name="Watahiki A."/>
            <person name="Okamura-Oho Y."/>
            <person name="Suzuki H."/>
            <person name="Kawai J."/>
            <person name="Hayashizaki Y."/>
        </authorList>
    </citation>
    <scope>NUCLEOTIDE SEQUENCE [LARGE SCALE MRNA] (ISOFORM 1)</scope>
    <scope>NUCLEOTIDE SEQUENCE [LARGE SCALE MRNA] OF 1-357 (ISOFORM 2)</scope>
    <source>
        <strain>C57BL/6J</strain>
        <tissue>Cerebellum</tissue>
        <tissue>Head</tissue>
    </source>
</reference>
<reference key="4">
    <citation type="journal article" date="2000" name="J. Cell Biol.">
        <title>Chlamydomonas IFT88 and its mouse homologue, polycystic kidney disease gene tg737, are required for assembly of cilia and flagella.</title>
        <authorList>
            <person name="Pazour G.J."/>
            <person name="Dickert B.L."/>
            <person name="Vucica Y."/>
            <person name="Seeley E.S."/>
            <person name="Rosenbaum J.L."/>
            <person name="Witman G.B."/>
            <person name="Cole D.G."/>
        </authorList>
    </citation>
    <scope>INTERACTION WITH IFT88</scope>
</reference>
<reference key="5">
    <citation type="journal article" date="2002" name="J. Cell Biol.">
        <title>The intraflagellar transport protein, IFT88, is essential for vertebrate photoreceptor assembly and maintenance.</title>
        <authorList>
            <person name="Pazour G.J."/>
            <person name="Baker S.A."/>
            <person name="Deane J.A."/>
            <person name="Cole D.G."/>
            <person name="Dickert B.L."/>
            <person name="Rosenbaum J.L."/>
            <person name="Witman G.B."/>
            <person name="Besharse J.C."/>
        </authorList>
    </citation>
    <scope>TISSUE SPECIFICITY</scope>
</reference>
<reference key="6">
    <citation type="journal article" date="2003" name="J. Biol. Chem.">
        <title>IFT20 links kinesin II with a mammalian intraflagellar transport complex that is conserved in motile flagella and sensory cilia.</title>
        <authorList>
            <person name="Baker S.A."/>
            <person name="Freeman K."/>
            <person name="Luby-Phelps K."/>
            <person name="Pazour G.J."/>
            <person name="Besharse J.C."/>
        </authorList>
    </citation>
    <scope>INTERACTION WITH IFT20</scope>
</reference>
<reference key="7">
    <citation type="journal article" date="2006" name="Dev. Biol.">
        <title>Hippi is essential for node cilia assembly and Sonic hedgehog signaling.</title>
        <authorList>
            <person name="Houde C."/>
            <person name="Dickinson R.J."/>
            <person name="Houtzager V.M."/>
            <person name="Cullum R."/>
            <person name="Montpetit R."/>
            <person name="Metzler M."/>
            <person name="Simpson E.M."/>
            <person name="Roy S."/>
            <person name="Hayden M.R."/>
            <person name="Hoodless P.A."/>
            <person name="Nicholson D.W."/>
        </authorList>
    </citation>
    <scope>FUNCTION</scope>
    <scope>DISRUPTION PHENOTYPE</scope>
    <scope>DEVELOPMENTAL STAGE</scope>
</reference>
<reference key="8">
    <citation type="journal article" date="2007" name="Apoptosis">
        <title>Rybp interacts with Hippi and enhances Hippi-mediated apoptosis.</title>
        <authorList>
            <person name="Stanton S.E."/>
            <person name="Blanck J.K."/>
            <person name="Locker J."/>
            <person name="Schreiber-Agus N."/>
        </authorList>
    </citation>
    <scope>INTERACTION WITH RYBP</scope>
</reference>
<reference key="9">
    <citation type="journal article" date="2007" name="Biochem. Biophys. Res. Commun.">
        <title>Homer1c interacts with Hippi and protects striatal neurons from apoptosis.</title>
        <authorList>
            <person name="Sakamoto K."/>
            <person name="Yoshida S."/>
            <person name="Ikegami K."/>
            <person name="Minakami R."/>
            <person name="Kato A."/>
            <person name="Udo H."/>
            <person name="Sugiyama H."/>
        </authorList>
    </citation>
    <scope>TISSUE SPECIFICITY</scope>
    <scope>INTERACTION WITH HOMER1</scope>
</reference>
<reference key="10">
    <citation type="journal article" date="2008" name="Apoptosis">
        <title>BLOC1S2 interacts with the HIPPI protein and sensitizes NCH89 glioblastoma cells to apoptosis.</title>
        <authorList>
            <person name="Gdynia G."/>
            <person name="Lehmann-Koch J."/>
            <person name="Sieber S."/>
            <person name="Tagscherer K.E."/>
            <person name="Fassl A."/>
            <person name="Zentgraf H."/>
            <person name="Matsuzawa S."/>
            <person name="Reed J.C."/>
            <person name="Roth W."/>
        </authorList>
    </citation>
    <scope>INTERACTION WITH BLOC1S2</scope>
</reference>
<reference key="11">
    <citation type="journal article" date="2008" name="Vision Res.">
        <title>Spatial distribution of intraflagellar transport proteins in vertebrate photoreceptors.</title>
        <authorList>
            <person name="Luby-Phelps K."/>
            <person name="Fogerty J."/>
            <person name="Baker S.A."/>
            <person name="Pazour G.J."/>
            <person name="Besharse J.C."/>
        </authorList>
    </citation>
    <scope>SUBCELLULAR LOCATION</scope>
</reference>
<reference key="12">
    <citation type="journal article" date="2009" name="Cell Motil. Cytoskeleton">
        <title>Characterization of mouse IFT complex B.</title>
        <authorList>
            <person name="Follit J.A."/>
            <person name="Xu F."/>
            <person name="Keady B.T."/>
            <person name="Pazour G.J."/>
        </authorList>
    </citation>
    <scope>IDENTIFICATION IN THE IFT COMPLEX B</scope>
    <scope>INTERACTION WITH IFT88</scope>
    <scope>SUBCELLULAR LOCATION</scope>
</reference>
<reference key="13">
    <citation type="journal article" date="2010" name="Cell">
        <title>A tissue-specific atlas of mouse protein phosphorylation and expression.</title>
        <authorList>
            <person name="Huttlin E.L."/>
            <person name="Jedrychowski M.P."/>
            <person name="Elias J.E."/>
            <person name="Goswami T."/>
            <person name="Rad R."/>
            <person name="Beausoleil S.A."/>
            <person name="Villen J."/>
            <person name="Haas W."/>
            <person name="Sowa M.E."/>
            <person name="Gygi S.P."/>
        </authorList>
    </citation>
    <scope>IDENTIFICATION BY MASS SPECTROMETRY [LARGE SCALE ANALYSIS]</scope>
    <source>
        <tissue>Testis</tissue>
    </source>
</reference>
<reference key="14">
    <citation type="journal article" date="2013" name="Exp. Cell Res.">
        <title>Interaction of mouse TTC30/DYF-1 with multiple intraflagellar transport complex B proteins and KIF17.</title>
        <authorList>
            <person name="Howard P.W."/>
            <person name="Jue S.F."/>
            <person name="Maurer R.A."/>
        </authorList>
    </citation>
    <scope>IDENTIFICATION IN THE IFT B COMPLEX</scope>
    <scope>INTERACTION WITH IFT80; IFT81; IFT74; IFT172; IFT88; IFT70B AND KIF17</scope>
</reference>
<reference key="15">
    <citation type="journal article" date="2015" name="PLoS ONE">
        <title>Characterization of tetratricopeptide repeat-containing proteins critical for cilia formation and function.</title>
        <authorList>
            <person name="Xu Y."/>
            <person name="Cao J."/>
            <person name="Huang S."/>
            <person name="Feng D."/>
            <person name="Zhang W."/>
            <person name="Zhu X."/>
            <person name="Yan X."/>
        </authorList>
    </citation>
    <scope>INTERACTION WITH TTC25</scope>
</reference>
<reference key="16">
    <citation type="journal article" date="2019" name="Front. Cell Dev. Biol.">
        <title>SANS (USH1G) Molecularly Links the Human Usher Syndrome Protein Network to the Intraflagellar Transport Module by Direct Binding to IFT-B Proteins.</title>
        <authorList>
            <person name="Sorusch N."/>
            <person name="Yildirim A."/>
            <person name="Knapp B."/>
            <person name="Janson J."/>
            <person name="Fleck W."/>
            <person name="Scharf C."/>
            <person name="Wolfrum U."/>
        </authorList>
    </citation>
    <scope>SUBCELLULAR LOCATION</scope>
</reference>
<feature type="chain" id="PRO_0000328885" description="Intraflagellar transport protein 57 homolog">
    <location>
        <begin position="1"/>
        <end position="429"/>
    </location>
</feature>
<feature type="region of interest" description="pDED">
    <location>
        <begin position="335"/>
        <end position="426"/>
    </location>
</feature>
<feature type="coiled-coil region" evidence="3">
    <location>
        <begin position="305"/>
        <end position="369"/>
    </location>
</feature>
<feature type="splice variant" id="VSP_032843" description="In isoform 2." evidence="16">
    <location>
        <begin position="1"/>
        <end position="85"/>
    </location>
</feature>
<feature type="sequence conflict" description="In Ref. 1; AAK69403." evidence="17" ref="1">
    <original>L</original>
    <variation>P</variation>
    <location>
        <position position="311"/>
    </location>
</feature>
<gene>
    <name type="primary">Ift57</name>
    <name type="synonym">Hippi</name>
</gene>